<proteinExistence type="inferred from homology"/>
<name>SCPA_LISW6</name>
<comment type="function">
    <text evidence="1">Participates in chromosomal partition during cell division. May act via the formation of a condensin-like complex containing Smc and ScpB that pull DNA away from mid-cell into both cell halves.</text>
</comment>
<comment type="subunit">
    <text evidence="1">Component of a cohesin-like complex composed of ScpA, ScpB and the Smc homodimer, in which ScpA and ScpB bind to the head domain of Smc. The presence of the three proteins is required for the association of the complex with DNA.</text>
</comment>
<comment type="subcellular location">
    <subcellularLocation>
        <location evidence="1">Cytoplasm</location>
    </subcellularLocation>
    <text evidence="1">Associated with two foci at the outer edges of the nucleoid region in young cells, and at four foci within both cell halves in older cells.</text>
</comment>
<comment type="similarity">
    <text evidence="1">Belongs to the ScpA family.</text>
</comment>
<accession>A0AK63</accession>
<protein>
    <recommendedName>
        <fullName evidence="1">Segregation and condensation protein A</fullName>
    </recommendedName>
</protein>
<dbReference type="EMBL" id="AM263198">
    <property type="protein sequence ID" value="CAK21395.1"/>
    <property type="molecule type" value="Genomic_DNA"/>
</dbReference>
<dbReference type="RefSeq" id="WP_011702742.1">
    <property type="nucleotide sequence ID" value="NC_008555.1"/>
</dbReference>
<dbReference type="SMR" id="A0AK63"/>
<dbReference type="STRING" id="386043.lwe1977"/>
<dbReference type="GeneID" id="61189877"/>
<dbReference type="KEGG" id="lwe:lwe1977"/>
<dbReference type="eggNOG" id="COG1354">
    <property type="taxonomic scope" value="Bacteria"/>
</dbReference>
<dbReference type="HOGENOM" id="CLU_038686_3_1_9"/>
<dbReference type="OrthoDB" id="9811016at2"/>
<dbReference type="Proteomes" id="UP000000779">
    <property type="component" value="Chromosome"/>
</dbReference>
<dbReference type="GO" id="GO:0005737">
    <property type="term" value="C:cytoplasm"/>
    <property type="evidence" value="ECO:0007669"/>
    <property type="project" value="UniProtKB-SubCell"/>
</dbReference>
<dbReference type="GO" id="GO:0051301">
    <property type="term" value="P:cell division"/>
    <property type="evidence" value="ECO:0007669"/>
    <property type="project" value="UniProtKB-KW"/>
</dbReference>
<dbReference type="GO" id="GO:0007059">
    <property type="term" value="P:chromosome segregation"/>
    <property type="evidence" value="ECO:0007669"/>
    <property type="project" value="UniProtKB-UniRule"/>
</dbReference>
<dbReference type="GO" id="GO:0006260">
    <property type="term" value="P:DNA replication"/>
    <property type="evidence" value="ECO:0007669"/>
    <property type="project" value="UniProtKB-UniRule"/>
</dbReference>
<dbReference type="Gene3D" id="6.10.250.2410">
    <property type="match status" value="1"/>
</dbReference>
<dbReference type="Gene3D" id="1.10.10.580">
    <property type="entry name" value="Structural maintenance of chromosome 1. Chain E"/>
    <property type="match status" value="1"/>
</dbReference>
<dbReference type="HAMAP" id="MF_01805">
    <property type="entry name" value="ScpA"/>
    <property type="match status" value="1"/>
</dbReference>
<dbReference type="InterPro" id="IPR003768">
    <property type="entry name" value="ScpA"/>
</dbReference>
<dbReference type="InterPro" id="IPR023093">
    <property type="entry name" value="ScpA-like_C"/>
</dbReference>
<dbReference type="NCBIfam" id="NF000995">
    <property type="entry name" value="PRK00104.1-4"/>
    <property type="match status" value="1"/>
</dbReference>
<dbReference type="PANTHER" id="PTHR33969">
    <property type="entry name" value="SEGREGATION AND CONDENSATION PROTEIN A"/>
    <property type="match status" value="1"/>
</dbReference>
<dbReference type="PANTHER" id="PTHR33969:SF2">
    <property type="entry name" value="SEGREGATION AND CONDENSATION PROTEIN A"/>
    <property type="match status" value="1"/>
</dbReference>
<dbReference type="Pfam" id="PF02616">
    <property type="entry name" value="SMC_ScpA"/>
    <property type="match status" value="1"/>
</dbReference>
<keyword id="KW-0131">Cell cycle</keyword>
<keyword id="KW-0132">Cell division</keyword>
<keyword id="KW-0159">Chromosome partition</keyword>
<keyword id="KW-0963">Cytoplasm</keyword>
<feature type="chain" id="PRO_1000069975" description="Segregation and condensation protein A">
    <location>
        <begin position="1"/>
        <end position="249"/>
    </location>
</feature>
<organism>
    <name type="scientific">Listeria welshimeri serovar 6b (strain ATCC 35897 / DSM 20650 / CCUG 15529 / CIP 8149 / NCTC 11857 / SLCC 5334 / V8)</name>
    <dbReference type="NCBI Taxonomy" id="386043"/>
    <lineage>
        <taxon>Bacteria</taxon>
        <taxon>Bacillati</taxon>
        <taxon>Bacillota</taxon>
        <taxon>Bacilli</taxon>
        <taxon>Bacillales</taxon>
        <taxon>Listeriaceae</taxon>
        <taxon>Listeria</taxon>
    </lineage>
</organism>
<sequence length="249" mass="29130">MVEMNFKVDAFEGPLDLLLHLIGQLEVDIYDIPMAEITDQYMEFVHTMQEMELDVASEYLVMAATLLAIKSKMLLPKQELEIDYDTLEEEEDPRDALVEKLMEYKRFKEAAKELKEKEAERSFYFSKPPMDLAEYDDGTKVAELDVSLNDMLSAFNKMLRRKKLNKPLHTRITTQEISIDDRMNSVLGKLNQQKNHRLRFDELFEEQTKEQLVVTFLALLELMKRKLVEVEQSESFADLYVQGKGEELS</sequence>
<reference key="1">
    <citation type="journal article" date="2006" name="J. Bacteriol.">
        <title>Whole-genome sequence of Listeria welshimeri reveals common steps in genome reduction with Listeria innocua as compared to Listeria monocytogenes.</title>
        <authorList>
            <person name="Hain T."/>
            <person name="Steinweg C."/>
            <person name="Kuenne C.T."/>
            <person name="Billion A."/>
            <person name="Ghai R."/>
            <person name="Chatterjee S.S."/>
            <person name="Domann E."/>
            <person name="Kaerst U."/>
            <person name="Goesmann A."/>
            <person name="Bekel T."/>
            <person name="Bartels D."/>
            <person name="Kaiser O."/>
            <person name="Meyer F."/>
            <person name="Puehler A."/>
            <person name="Weisshaar B."/>
            <person name="Wehland J."/>
            <person name="Liang C."/>
            <person name="Dandekar T."/>
            <person name="Lampidis R."/>
            <person name="Kreft J."/>
            <person name="Goebel W."/>
            <person name="Chakraborty T."/>
        </authorList>
    </citation>
    <scope>NUCLEOTIDE SEQUENCE [LARGE SCALE GENOMIC DNA]</scope>
    <source>
        <strain>ATCC 35897 / DSM 20650 / CCUG 15529 / CIP 8149 / NCTC 11857 / SLCC 5334 / V8</strain>
    </source>
</reference>
<gene>
    <name evidence="1" type="primary">scpA</name>
    <name type="ordered locus">lwe1977</name>
</gene>
<evidence type="ECO:0000255" key="1">
    <source>
        <dbReference type="HAMAP-Rule" id="MF_01805"/>
    </source>
</evidence>